<organism>
    <name type="scientific">Burkholderia pseudomallei (strain K96243)</name>
    <dbReference type="NCBI Taxonomy" id="272560"/>
    <lineage>
        <taxon>Bacteria</taxon>
        <taxon>Pseudomonadati</taxon>
        <taxon>Pseudomonadota</taxon>
        <taxon>Betaproteobacteria</taxon>
        <taxon>Burkholderiales</taxon>
        <taxon>Burkholderiaceae</taxon>
        <taxon>Burkholderia</taxon>
        <taxon>pseudomallei group</taxon>
    </lineage>
</organism>
<accession>Q63R24</accession>
<proteinExistence type="inferred from homology"/>
<name>PHNC_BURPS</name>
<feature type="chain" id="PRO_0000092702" description="Phosphonates import ATP-binding protein PhnC">
    <location>
        <begin position="1"/>
        <end position="307"/>
    </location>
</feature>
<feature type="domain" description="ABC transporter" evidence="1">
    <location>
        <begin position="4"/>
        <end position="252"/>
    </location>
</feature>
<feature type="region of interest" description="Disordered" evidence="2">
    <location>
        <begin position="265"/>
        <end position="307"/>
    </location>
</feature>
<feature type="compositionally biased region" description="Basic and acidic residues" evidence="2">
    <location>
        <begin position="265"/>
        <end position="275"/>
    </location>
</feature>
<feature type="binding site" evidence="1">
    <location>
        <begin position="37"/>
        <end position="44"/>
    </location>
    <ligand>
        <name>ATP</name>
        <dbReference type="ChEBI" id="CHEBI:30616"/>
    </ligand>
</feature>
<comment type="function">
    <text evidence="1">Part of the ABC transporter complex PhnCDE involved in phosphonates import. Responsible for energy coupling to the transport system.</text>
</comment>
<comment type="catalytic activity">
    <reaction evidence="1">
        <text>phosphonate(out) + ATP + H2O = phosphonate(in) + ADP + phosphate + H(+)</text>
        <dbReference type="Rhea" id="RHEA:18065"/>
        <dbReference type="ChEBI" id="CHEBI:15377"/>
        <dbReference type="ChEBI" id="CHEBI:15378"/>
        <dbReference type="ChEBI" id="CHEBI:16215"/>
        <dbReference type="ChEBI" id="CHEBI:30616"/>
        <dbReference type="ChEBI" id="CHEBI:43474"/>
        <dbReference type="ChEBI" id="CHEBI:456216"/>
        <dbReference type="EC" id="7.3.2.2"/>
    </reaction>
</comment>
<comment type="subunit">
    <text evidence="1">The complex is composed of two ATP-binding proteins (PhnC), two transmembrane proteins (PhnE) and a solute-binding protein (PhnD).</text>
</comment>
<comment type="subcellular location">
    <subcellularLocation>
        <location evidence="1">Cell inner membrane</location>
        <topology evidence="1">Peripheral membrane protein</topology>
    </subcellularLocation>
</comment>
<comment type="similarity">
    <text evidence="1">Belongs to the ABC transporter superfamily. Phosphonates importer (TC 3.A.1.9.1) family.</text>
</comment>
<comment type="sequence caution" evidence="3">
    <conflict type="erroneous initiation">
        <sequence resource="EMBL-CDS" id="CAH36860"/>
    </conflict>
</comment>
<sequence length="307" mass="33386">MDAIRIERLSKTFPNGRKGLEDIDLAIAPGEMVALIGASGSGKSTLLRQIASFSSSDARPSRIDIFGRSIQRDGRIARDVRRMRRDIGFVFQQFNLVDRLSVETNVLIGALARVPMWRRLAGRFSRADRALAAQALGEVGIAEHARERAANLSGGQQQRAALARALVQRARIILADEPIASLDPAASRRVMEMLRALNANHRLTVLVSLHQIDVALRFCPRVVALRAGRIVYDGPSAALTRERLHALYGDDAHLPFAVGDEVRPAAREAAGEPARRAPAAFDSAGSPDLPDSQPASPRRMLAASSMR</sequence>
<evidence type="ECO:0000255" key="1">
    <source>
        <dbReference type="HAMAP-Rule" id="MF_01713"/>
    </source>
</evidence>
<evidence type="ECO:0000256" key="2">
    <source>
        <dbReference type="SAM" id="MobiDB-lite"/>
    </source>
</evidence>
<evidence type="ECO:0000305" key="3"/>
<dbReference type="EC" id="7.3.2.2" evidence="1"/>
<dbReference type="EMBL" id="BX571965">
    <property type="protein sequence ID" value="CAH36860.1"/>
    <property type="status" value="ALT_INIT"/>
    <property type="molecule type" value="Genomic_DNA"/>
</dbReference>
<dbReference type="RefSeq" id="WP_004527694.1">
    <property type="nucleotide sequence ID" value="NZ_CP009538.1"/>
</dbReference>
<dbReference type="RefSeq" id="YP_109444.1">
    <property type="nucleotide sequence ID" value="NC_006350.1"/>
</dbReference>
<dbReference type="SMR" id="Q63R24"/>
<dbReference type="STRING" id="272560.BPSL2850"/>
<dbReference type="GeneID" id="93061440"/>
<dbReference type="KEGG" id="bps:BPSL2850"/>
<dbReference type="PATRIC" id="fig|272560.51.peg.2450"/>
<dbReference type="eggNOG" id="COG3638">
    <property type="taxonomic scope" value="Bacteria"/>
</dbReference>
<dbReference type="Proteomes" id="UP000000605">
    <property type="component" value="Chromosome 1"/>
</dbReference>
<dbReference type="GO" id="GO:0005886">
    <property type="term" value="C:plasma membrane"/>
    <property type="evidence" value="ECO:0007669"/>
    <property type="project" value="UniProtKB-SubCell"/>
</dbReference>
<dbReference type="GO" id="GO:0015416">
    <property type="term" value="F:ABC-type phosphonate transporter activity"/>
    <property type="evidence" value="ECO:0007669"/>
    <property type="project" value="UniProtKB-EC"/>
</dbReference>
<dbReference type="GO" id="GO:0005524">
    <property type="term" value="F:ATP binding"/>
    <property type="evidence" value="ECO:0007669"/>
    <property type="project" value="UniProtKB-KW"/>
</dbReference>
<dbReference type="GO" id="GO:0016887">
    <property type="term" value="F:ATP hydrolysis activity"/>
    <property type="evidence" value="ECO:0007669"/>
    <property type="project" value="InterPro"/>
</dbReference>
<dbReference type="CDD" id="cd03256">
    <property type="entry name" value="ABC_PhnC_transporter"/>
    <property type="match status" value="1"/>
</dbReference>
<dbReference type="Gene3D" id="3.40.50.300">
    <property type="entry name" value="P-loop containing nucleotide triphosphate hydrolases"/>
    <property type="match status" value="1"/>
</dbReference>
<dbReference type="InterPro" id="IPR003593">
    <property type="entry name" value="AAA+_ATPase"/>
</dbReference>
<dbReference type="InterPro" id="IPR003439">
    <property type="entry name" value="ABC_transporter-like_ATP-bd"/>
</dbReference>
<dbReference type="InterPro" id="IPR017871">
    <property type="entry name" value="ABC_transporter-like_CS"/>
</dbReference>
<dbReference type="InterPro" id="IPR012693">
    <property type="entry name" value="ABC_transpr_PhnC"/>
</dbReference>
<dbReference type="InterPro" id="IPR050086">
    <property type="entry name" value="MetN_ABC_transporter-like"/>
</dbReference>
<dbReference type="InterPro" id="IPR027417">
    <property type="entry name" value="P-loop_NTPase"/>
</dbReference>
<dbReference type="NCBIfam" id="TIGR02315">
    <property type="entry name" value="ABC_phnC"/>
    <property type="match status" value="1"/>
</dbReference>
<dbReference type="PANTHER" id="PTHR43166">
    <property type="entry name" value="AMINO ACID IMPORT ATP-BINDING PROTEIN"/>
    <property type="match status" value="1"/>
</dbReference>
<dbReference type="PANTHER" id="PTHR43166:SF6">
    <property type="entry name" value="PHOSPHONATES IMPORT ATP-BINDING PROTEIN PHNC"/>
    <property type="match status" value="1"/>
</dbReference>
<dbReference type="Pfam" id="PF00005">
    <property type="entry name" value="ABC_tran"/>
    <property type="match status" value="1"/>
</dbReference>
<dbReference type="SMART" id="SM00382">
    <property type="entry name" value="AAA"/>
    <property type="match status" value="1"/>
</dbReference>
<dbReference type="SUPFAM" id="SSF52540">
    <property type="entry name" value="P-loop containing nucleoside triphosphate hydrolases"/>
    <property type="match status" value="1"/>
</dbReference>
<dbReference type="PROSITE" id="PS00211">
    <property type="entry name" value="ABC_TRANSPORTER_1"/>
    <property type="match status" value="1"/>
</dbReference>
<dbReference type="PROSITE" id="PS50893">
    <property type="entry name" value="ABC_TRANSPORTER_2"/>
    <property type="match status" value="1"/>
</dbReference>
<dbReference type="PROSITE" id="PS51249">
    <property type="entry name" value="PHNC"/>
    <property type="match status" value="1"/>
</dbReference>
<protein>
    <recommendedName>
        <fullName evidence="1">Phosphonates import ATP-binding protein PhnC</fullName>
        <ecNumber evidence="1">7.3.2.2</ecNumber>
    </recommendedName>
</protein>
<keyword id="KW-0067">ATP-binding</keyword>
<keyword id="KW-0997">Cell inner membrane</keyword>
<keyword id="KW-1003">Cell membrane</keyword>
<keyword id="KW-0472">Membrane</keyword>
<keyword id="KW-0547">Nucleotide-binding</keyword>
<keyword id="KW-0918">Phosphonate transport</keyword>
<keyword id="KW-1185">Reference proteome</keyword>
<keyword id="KW-1278">Translocase</keyword>
<keyword id="KW-0813">Transport</keyword>
<reference key="1">
    <citation type="journal article" date="2004" name="Proc. Natl. Acad. Sci. U.S.A.">
        <title>Genomic plasticity of the causative agent of melioidosis, Burkholderia pseudomallei.</title>
        <authorList>
            <person name="Holden M.T.G."/>
            <person name="Titball R.W."/>
            <person name="Peacock S.J."/>
            <person name="Cerdeno-Tarraga A.-M."/>
            <person name="Atkins T."/>
            <person name="Crossman L.C."/>
            <person name="Pitt T."/>
            <person name="Churcher C."/>
            <person name="Mungall K.L."/>
            <person name="Bentley S.D."/>
            <person name="Sebaihia M."/>
            <person name="Thomson N.R."/>
            <person name="Bason N."/>
            <person name="Beacham I.R."/>
            <person name="Brooks K."/>
            <person name="Brown K.A."/>
            <person name="Brown N.F."/>
            <person name="Challis G.L."/>
            <person name="Cherevach I."/>
            <person name="Chillingworth T."/>
            <person name="Cronin A."/>
            <person name="Crossett B."/>
            <person name="Davis P."/>
            <person name="DeShazer D."/>
            <person name="Feltwell T."/>
            <person name="Fraser A."/>
            <person name="Hance Z."/>
            <person name="Hauser H."/>
            <person name="Holroyd S."/>
            <person name="Jagels K."/>
            <person name="Keith K.E."/>
            <person name="Maddison M."/>
            <person name="Moule S."/>
            <person name="Price C."/>
            <person name="Quail M.A."/>
            <person name="Rabbinowitsch E."/>
            <person name="Rutherford K."/>
            <person name="Sanders M."/>
            <person name="Simmonds M."/>
            <person name="Songsivilai S."/>
            <person name="Stevens K."/>
            <person name="Tumapa S."/>
            <person name="Vesaratchavest M."/>
            <person name="Whitehead S."/>
            <person name="Yeats C."/>
            <person name="Barrell B.G."/>
            <person name="Oyston P.C.F."/>
            <person name="Parkhill J."/>
        </authorList>
    </citation>
    <scope>NUCLEOTIDE SEQUENCE [LARGE SCALE GENOMIC DNA]</scope>
    <source>
        <strain>K96243</strain>
    </source>
</reference>
<gene>
    <name evidence="1" type="primary">phnC</name>
    <name type="ordered locus">BPSL2850</name>
</gene>